<comment type="function">
    <text evidence="2 3 4">Component of the ribosome, a large ribonucleoprotein complex responsible for the synthesis of proteins in the cell (PubMed:23636399). The small ribosomal subunit (SSU) binds messenger RNAs (mRNAs) and translates the encoded message by selecting cognate aminoacyl-transfer RNA (tRNA) molecules (Probable). The large subunit (LSU) contains the ribosomal catalytic site termed the peptidyl transferase center (PTC), which catalyzes the formation of peptide bonds, thereby polymerizing the amino acids delivered by tRNAs into a polypeptide chain (Probable). The nascent polypeptides leave the ribosome through a tunnel in the LSU and interact with protein factors that function in enzymatic processing, targeting, and the membrane insertion of nascent chains at the exit of the ribosomal tunnel (Probable). As part of the LSU, it is probably required for its formation and the maturation of rRNAs (Probable).</text>
</comment>
<comment type="subunit">
    <text evidence="4">Component of the 60S large ribosomal subunit (LSU).</text>
</comment>
<comment type="subcellular location">
    <subcellularLocation>
        <location evidence="4">Cytoplasm</location>
    </subcellularLocation>
</comment>
<comment type="similarity">
    <text evidence="3">Belongs to the eukaryotic ribosomal protein eL13 family.</text>
</comment>
<evidence type="ECO:0000256" key="1">
    <source>
        <dbReference type="SAM" id="MobiDB-lite"/>
    </source>
</evidence>
<evidence type="ECO:0000269" key="2">
    <source>
    </source>
</evidence>
<evidence type="ECO:0000305" key="3"/>
<evidence type="ECO:0000305" key="4">
    <source>
    </source>
</evidence>
<protein>
    <recommendedName>
        <fullName evidence="3">Large ribosomal subunit protein eL13</fullName>
    </recommendedName>
    <alternativeName>
        <fullName>60S ribosomal protein L13</fullName>
    </alternativeName>
    <alternativeName>
        <fullName>BBC1 protein homolog</fullName>
    </alternativeName>
</protein>
<feature type="chain" id="PRO_0000192925" description="Large ribosomal subunit protein eL13">
    <location>
        <begin position="1"/>
        <end position="218"/>
    </location>
</feature>
<feature type="region of interest" description="Disordered" evidence="1">
    <location>
        <begin position="196"/>
        <end position="218"/>
    </location>
</feature>
<feature type="compositionally biased region" description="Basic and acidic residues" evidence="1">
    <location>
        <begin position="199"/>
        <end position="218"/>
    </location>
</feature>
<name>RL13_DROME</name>
<dbReference type="EMBL" id="X77926">
    <property type="protein sequence ID" value="CAA54898.1"/>
    <property type="molecule type" value="Genomic_DNA"/>
</dbReference>
<dbReference type="EMBL" id="AE014134">
    <property type="protein sequence ID" value="AAF52842.1"/>
    <property type="molecule type" value="Genomic_DNA"/>
</dbReference>
<dbReference type="EMBL" id="AE014134">
    <property type="protein sequence ID" value="ABC65888.1"/>
    <property type="molecule type" value="Genomic_DNA"/>
</dbReference>
<dbReference type="EMBL" id="BT053725">
    <property type="protein sequence ID" value="ACK77643.1"/>
    <property type="molecule type" value="mRNA"/>
</dbReference>
<dbReference type="EMBL" id="BT128812">
    <property type="protein sequence ID" value="AEM72508.1"/>
    <property type="molecule type" value="mRNA"/>
</dbReference>
<dbReference type="PIR" id="JC4260">
    <property type="entry name" value="JC4260"/>
</dbReference>
<dbReference type="PIR" id="S42877">
    <property type="entry name" value="S42877"/>
</dbReference>
<dbReference type="RefSeq" id="NP_001033891.1">
    <property type="nucleotide sequence ID" value="NM_001038802.2"/>
</dbReference>
<dbReference type="RefSeq" id="NP_001260312.1">
    <property type="nucleotide sequence ID" value="NM_001273383.2"/>
</dbReference>
<dbReference type="RefSeq" id="NP_523530.1">
    <property type="nucleotide sequence ID" value="NM_078806.4"/>
</dbReference>
<dbReference type="PDB" id="4V6W">
    <property type="method" value="EM"/>
    <property type="resolution" value="6.00 A"/>
    <property type="chains" value="CL=1-218"/>
</dbReference>
<dbReference type="PDB" id="6XU6">
    <property type="method" value="EM"/>
    <property type="resolution" value="3.50 A"/>
    <property type="chains" value="CL=2-211"/>
</dbReference>
<dbReference type="PDB" id="6XU7">
    <property type="method" value="EM"/>
    <property type="resolution" value="4.90 A"/>
    <property type="chains" value="CL=2-211"/>
</dbReference>
<dbReference type="PDB" id="6XU8">
    <property type="method" value="EM"/>
    <property type="resolution" value="3.00 A"/>
    <property type="chains" value="CL=2-211"/>
</dbReference>
<dbReference type="PDBsum" id="4V6W"/>
<dbReference type="PDBsum" id="6XU6"/>
<dbReference type="PDBsum" id="6XU7"/>
<dbReference type="PDBsum" id="6XU8"/>
<dbReference type="EMDB" id="EMD-10622"/>
<dbReference type="EMDB" id="EMD-10623"/>
<dbReference type="EMDB" id="EMD-10624"/>
<dbReference type="SMR" id="P41126"/>
<dbReference type="BioGRID" id="60423">
    <property type="interactions" value="109"/>
</dbReference>
<dbReference type="DIP" id="DIP-19420N"/>
<dbReference type="FunCoup" id="P41126">
    <property type="interactions" value="1231"/>
</dbReference>
<dbReference type="IntAct" id="P41126">
    <property type="interactions" value="2"/>
</dbReference>
<dbReference type="MINT" id="P41126"/>
<dbReference type="STRING" id="7227.FBpp0302626"/>
<dbReference type="PaxDb" id="7227-FBpp0079484"/>
<dbReference type="DNASU" id="34329"/>
<dbReference type="EnsemblMetazoa" id="FBtr0079888">
    <property type="protein sequence ID" value="FBpp0079484"/>
    <property type="gene ID" value="FBgn0011272"/>
</dbReference>
<dbReference type="EnsemblMetazoa" id="FBtr0100164">
    <property type="protein sequence ID" value="FBpp0099517"/>
    <property type="gene ID" value="FBgn0011272"/>
</dbReference>
<dbReference type="EnsemblMetazoa" id="FBtr0310482">
    <property type="protein sequence ID" value="FBpp0302626"/>
    <property type="gene ID" value="FBgn0011272"/>
</dbReference>
<dbReference type="GeneID" id="34329"/>
<dbReference type="KEGG" id="dme:Dmel_CG4651"/>
<dbReference type="AGR" id="FB:FBgn0011272"/>
<dbReference type="CTD" id="6137"/>
<dbReference type="FlyBase" id="FBgn0011272">
    <property type="gene designation" value="RpL13"/>
</dbReference>
<dbReference type="VEuPathDB" id="VectorBase:FBgn0011272"/>
<dbReference type="eggNOG" id="KOG3295">
    <property type="taxonomic scope" value="Eukaryota"/>
</dbReference>
<dbReference type="GeneTree" id="ENSGT00390000007818"/>
<dbReference type="HOGENOM" id="CLU_075696_1_0_1"/>
<dbReference type="InParanoid" id="P41126"/>
<dbReference type="OMA" id="HWHKRIK"/>
<dbReference type="OrthoDB" id="10264538at2759"/>
<dbReference type="PhylomeDB" id="P41126"/>
<dbReference type="Reactome" id="R-DME-156827">
    <property type="pathway name" value="L13a-mediated translational silencing of Ceruloplasmin expression"/>
</dbReference>
<dbReference type="Reactome" id="R-DME-1799339">
    <property type="pathway name" value="SRP-dependent cotranslational protein targeting to membrane"/>
</dbReference>
<dbReference type="Reactome" id="R-DME-72689">
    <property type="pathway name" value="Formation of a pool of free 40S subunits"/>
</dbReference>
<dbReference type="Reactome" id="R-DME-72706">
    <property type="pathway name" value="GTP hydrolysis and joining of the 60S ribosomal subunit"/>
</dbReference>
<dbReference type="Reactome" id="R-DME-975956">
    <property type="pathway name" value="Nonsense Mediated Decay (NMD) independent of the Exon Junction Complex (EJC)"/>
</dbReference>
<dbReference type="Reactome" id="R-DME-975957">
    <property type="pathway name" value="Nonsense Mediated Decay (NMD) enhanced by the Exon Junction Complex (EJC)"/>
</dbReference>
<dbReference type="BioGRID-ORCS" id="34329">
    <property type="hits" value="1 hit in 1 CRISPR screen"/>
</dbReference>
<dbReference type="ChiTaRS" id="RpL13">
    <property type="organism name" value="fly"/>
</dbReference>
<dbReference type="GenomeRNAi" id="34329"/>
<dbReference type="PRO" id="PR:P41126"/>
<dbReference type="Proteomes" id="UP000000803">
    <property type="component" value="Chromosome 2L"/>
</dbReference>
<dbReference type="Bgee" id="FBgn0011272">
    <property type="expression patterns" value="Expressed in eye disc (Drosophila) and 292 other cell types or tissues"/>
</dbReference>
<dbReference type="ExpressionAtlas" id="P41126">
    <property type="expression patterns" value="baseline and differential"/>
</dbReference>
<dbReference type="GO" id="GO:0022625">
    <property type="term" value="C:cytosolic large ribosomal subunit"/>
    <property type="evidence" value="ECO:0000318"/>
    <property type="project" value="GO_Central"/>
</dbReference>
<dbReference type="GO" id="GO:0022626">
    <property type="term" value="C:cytosolic ribosome"/>
    <property type="evidence" value="ECO:0000314"/>
    <property type="project" value="FlyBase"/>
</dbReference>
<dbReference type="GO" id="GO:0003723">
    <property type="term" value="F:RNA binding"/>
    <property type="evidence" value="ECO:0000318"/>
    <property type="project" value="GO_Central"/>
</dbReference>
<dbReference type="GO" id="GO:0003735">
    <property type="term" value="F:structural constituent of ribosome"/>
    <property type="evidence" value="ECO:0000314"/>
    <property type="project" value="FlyBase"/>
</dbReference>
<dbReference type="GO" id="GO:0002181">
    <property type="term" value="P:cytoplasmic translation"/>
    <property type="evidence" value="ECO:0000304"/>
    <property type="project" value="FlyBase"/>
</dbReference>
<dbReference type="FunFam" id="1.20.5.110:FF:000003">
    <property type="entry name" value="60S ribosomal protein L13"/>
    <property type="match status" value="1"/>
</dbReference>
<dbReference type="Gene3D" id="1.20.5.110">
    <property type="match status" value="1"/>
</dbReference>
<dbReference type="HAMAP" id="MF_00499">
    <property type="entry name" value="Ribosomal_eL13"/>
    <property type="match status" value="1"/>
</dbReference>
<dbReference type="InterPro" id="IPR001380">
    <property type="entry name" value="Ribosomal_eL13"/>
</dbReference>
<dbReference type="InterPro" id="IPR018256">
    <property type="entry name" value="Ribosomal_eL13_CS"/>
</dbReference>
<dbReference type="PANTHER" id="PTHR11722">
    <property type="entry name" value="60S RIBOSOMAL PROTEIN L13"/>
    <property type="match status" value="1"/>
</dbReference>
<dbReference type="PANTHER" id="PTHR11722:SF0">
    <property type="entry name" value="LARGE RIBOSOMAL SUBUNIT PROTEIN EL13"/>
    <property type="match status" value="1"/>
</dbReference>
<dbReference type="Pfam" id="PF01294">
    <property type="entry name" value="Ribosomal_L13e"/>
    <property type="match status" value="1"/>
</dbReference>
<dbReference type="PROSITE" id="PS01104">
    <property type="entry name" value="RIBOSOMAL_L13E"/>
    <property type="match status" value="1"/>
</dbReference>
<accession>P41126</accession>
<accession>A4V0I6</accession>
<accession>B7FNN5</accession>
<accession>Q9VL55</accession>
<sequence>MGKGNNMIPNQHYHKWWQRHVKTWFNQPARKVRRHANRVKKAKAVFPRPASGALRPVVRCPTIRYHTKLRAGRGFTLEELKGAGIGANFAKTIGIAVDRRRKNKSLESRQRNIQRLKEYRSKLILFPINEKKIRAGESSLEECKLATQLKGPVLPIKNEQPAVVEFREVTKDEKKFKAFATLRKARTDARLVGIRAKRAKEAAESEDAAKGDPKKAKK</sequence>
<proteinExistence type="evidence at protein level"/>
<gene>
    <name type="primary">RpL13</name>
    <name type="synonym">bbc1</name>
    <name type="ORF">CG4651</name>
</gene>
<reference key="1">
    <citation type="journal article" date="1995" name="Gene">
        <title>The Drosophila melanogaster homologue of the human BBC1 gene is highly expressed during embryogenesis.</title>
        <authorList>
            <person name="Helps N.R."/>
            <person name="Adams S.M."/>
            <person name="Brammar W.J."/>
            <person name="Varley J.M."/>
        </authorList>
    </citation>
    <scope>NUCLEOTIDE SEQUENCE [GENOMIC DNA]</scope>
    <source>
        <strain>Brighton</strain>
        <tissue>Embryo</tissue>
    </source>
</reference>
<reference key="2">
    <citation type="journal article" date="2000" name="Science">
        <title>The genome sequence of Drosophila melanogaster.</title>
        <authorList>
            <person name="Adams M.D."/>
            <person name="Celniker S.E."/>
            <person name="Holt R.A."/>
            <person name="Evans C.A."/>
            <person name="Gocayne J.D."/>
            <person name="Amanatides P.G."/>
            <person name="Scherer S.E."/>
            <person name="Li P.W."/>
            <person name="Hoskins R.A."/>
            <person name="Galle R.F."/>
            <person name="George R.A."/>
            <person name="Lewis S.E."/>
            <person name="Richards S."/>
            <person name="Ashburner M."/>
            <person name="Henderson S.N."/>
            <person name="Sutton G.G."/>
            <person name="Wortman J.R."/>
            <person name="Yandell M.D."/>
            <person name="Zhang Q."/>
            <person name="Chen L.X."/>
            <person name="Brandon R.C."/>
            <person name="Rogers Y.-H.C."/>
            <person name="Blazej R.G."/>
            <person name="Champe M."/>
            <person name="Pfeiffer B.D."/>
            <person name="Wan K.H."/>
            <person name="Doyle C."/>
            <person name="Baxter E.G."/>
            <person name="Helt G."/>
            <person name="Nelson C.R."/>
            <person name="Miklos G.L.G."/>
            <person name="Abril J.F."/>
            <person name="Agbayani A."/>
            <person name="An H.-J."/>
            <person name="Andrews-Pfannkoch C."/>
            <person name="Baldwin D."/>
            <person name="Ballew R.M."/>
            <person name="Basu A."/>
            <person name="Baxendale J."/>
            <person name="Bayraktaroglu L."/>
            <person name="Beasley E.M."/>
            <person name="Beeson K.Y."/>
            <person name="Benos P.V."/>
            <person name="Berman B.P."/>
            <person name="Bhandari D."/>
            <person name="Bolshakov S."/>
            <person name="Borkova D."/>
            <person name="Botchan M.R."/>
            <person name="Bouck J."/>
            <person name="Brokstein P."/>
            <person name="Brottier P."/>
            <person name="Burtis K.C."/>
            <person name="Busam D.A."/>
            <person name="Butler H."/>
            <person name="Cadieu E."/>
            <person name="Center A."/>
            <person name="Chandra I."/>
            <person name="Cherry J.M."/>
            <person name="Cawley S."/>
            <person name="Dahlke C."/>
            <person name="Davenport L.B."/>
            <person name="Davies P."/>
            <person name="de Pablos B."/>
            <person name="Delcher A."/>
            <person name="Deng Z."/>
            <person name="Mays A.D."/>
            <person name="Dew I."/>
            <person name="Dietz S.M."/>
            <person name="Dodson K."/>
            <person name="Doup L.E."/>
            <person name="Downes M."/>
            <person name="Dugan-Rocha S."/>
            <person name="Dunkov B.C."/>
            <person name="Dunn P."/>
            <person name="Durbin K.J."/>
            <person name="Evangelista C.C."/>
            <person name="Ferraz C."/>
            <person name="Ferriera S."/>
            <person name="Fleischmann W."/>
            <person name="Fosler C."/>
            <person name="Gabrielian A.E."/>
            <person name="Garg N.S."/>
            <person name="Gelbart W.M."/>
            <person name="Glasser K."/>
            <person name="Glodek A."/>
            <person name="Gong F."/>
            <person name="Gorrell J.H."/>
            <person name="Gu Z."/>
            <person name="Guan P."/>
            <person name="Harris M."/>
            <person name="Harris N.L."/>
            <person name="Harvey D.A."/>
            <person name="Heiman T.J."/>
            <person name="Hernandez J.R."/>
            <person name="Houck J."/>
            <person name="Hostin D."/>
            <person name="Houston K.A."/>
            <person name="Howland T.J."/>
            <person name="Wei M.-H."/>
            <person name="Ibegwam C."/>
            <person name="Jalali M."/>
            <person name="Kalush F."/>
            <person name="Karpen G.H."/>
            <person name="Ke Z."/>
            <person name="Kennison J.A."/>
            <person name="Ketchum K.A."/>
            <person name="Kimmel B.E."/>
            <person name="Kodira C.D."/>
            <person name="Kraft C.L."/>
            <person name="Kravitz S."/>
            <person name="Kulp D."/>
            <person name="Lai Z."/>
            <person name="Lasko P."/>
            <person name="Lei Y."/>
            <person name="Levitsky A.A."/>
            <person name="Li J.H."/>
            <person name="Li Z."/>
            <person name="Liang Y."/>
            <person name="Lin X."/>
            <person name="Liu X."/>
            <person name="Mattei B."/>
            <person name="McIntosh T.C."/>
            <person name="McLeod M.P."/>
            <person name="McPherson D."/>
            <person name="Merkulov G."/>
            <person name="Milshina N.V."/>
            <person name="Mobarry C."/>
            <person name="Morris J."/>
            <person name="Moshrefi A."/>
            <person name="Mount S.M."/>
            <person name="Moy M."/>
            <person name="Murphy B."/>
            <person name="Murphy L."/>
            <person name="Muzny D.M."/>
            <person name="Nelson D.L."/>
            <person name="Nelson D.R."/>
            <person name="Nelson K.A."/>
            <person name="Nixon K."/>
            <person name="Nusskern D.R."/>
            <person name="Pacleb J.M."/>
            <person name="Palazzolo M."/>
            <person name="Pittman G.S."/>
            <person name="Pan S."/>
            <person name="Pollard J."/>
            <person name="Puri V."/>
            <person name="Reese M.G."/>
            <person name="Reinert K."/>
            <person name="Remington K."/>
            <person name="Saunders R.D.C."/>
            <person name="Scheeler F."/>
            <person name="Shen H."/>
            <person name="Shue B.C."/>
            <person name="Siden-Kiamos I."/>
            <person name="Simpson M."/>
            <person name="Skupski M.P."/>
            <person name="Smith T.J."/>
            <person name="Spier E."/>
            <person name="Spradling A.C."/>
            <person name="Stapleton M."/>
            <person name="Strong R."/>
            <person name="Sun E."/>
            <person name="Svirskas R."/>
            <person name="Tector C."/>
            <person name="Turner R."/>
            <person name="Venter E."/>
            <person name="Wang A.H."/>
            <person name="Wang X."/>
            <person name="Wang Z.-Y."/>
            <person name="Wassarman D.A."/>
            <person name="Weinstock G.M."/>
            <person name="Weissenbach J."/>
            <person name="Williams S.M."/>
            <person name="Woodage T."/>
            <person name="Worley K.C."/>
            <person name="Wu D."/>
            <person name="Yang S."/>
            <person name="Yao Q.A."/>
            <person name="Ye J."/>
            <person name="Yeh R.-F."/>
            <person name="Zaveri J.S."/>
            <person name="Zhan M."/>
            <person name="Zhang G."/>
            <person name="Zhao Q."/>
            <person name="Zheng L."/>
            <person name="Zheng X.H."/>
            <person name="Zhong F.N."/>
            <person name="Zhong W."/>
            <person name="Zhou X."/>
            <person name="Zhu S.C."/>
            <person name="Zhu X."/>
            <person name="Smith H.O."/>
            <person name="Gibbs R.A."/>
            <person name="Myers E.W."/>
            <person name="Rubin G.M."/>
            <person name="Venter J.C."/>
        </authorList>
    </citation>
    <scope>NUCLEOTIDE SEQUENCE [LARGE SCALE GENOMIC DNA]</scope>
    <source>
        <strain>Berkeley</strain>
    </source>
</reference>
<reference key="3">
    <citation type="journal article" date="2002" name="Genome Biol.">
        <title>Annotation of the Drosophila melanogaster euchromatic genome: a systematic review.</title>
        <authorList>
            <person name="Misra S."/>
            <person name="Crosby M.A."/>
            <person name="Mungall C.J."/>
            <person name="Matthews B.B."/>
            <person name="Campbell K.S."/>
            <person name="Hradecky P."/>
            <person name="Huang Y."/>
            <person name="Kaminker J.S."/>
            <person name="Millburn G.H."/>
            <person name="Prochnik S.E."/>
            <person name="Smith C.D."/>
            <person name="Tupy J.L."/>
            <person name="Whitfield E.J."/>
            <person name="Bayraktaroglu L."/>
            <person name="Berman B.P."/>
            <person name="Bettencourt B.R."/>
            <person name="Celniker S.E."/>
            <person name="de Grey A.D.N.J."/>
            <person name="Drysdale R.A."/>
            <person name="Harris N.L."/>
            <person name="Richter J."/>
            <person name="Russo S."/>
            <person name="Schroeder A.J."/>
            <person name="Shu S.Q."/>
            <person name="Stapleton M."/>
            <person name="Yamada C."/>
            <person name="Ashburner M."/>
            <person name="Gelbart W.M."/>
            <person name="Rubin G.M."/>
            <person name="Lewis S.E."/>
        </authorList>
    </citation>
    <scope>GENOME REANNOTATION</scope>
    <source>
        <strain>Berkeley</strain>
    </source>
</reference>
<reference key="4">
    <citation type="submission" date="2008-12" db="EMBL/GenBank/DDBJ databases">
        <authorList>
            <person name="Carlson J."/>
            <person name="Booth B."/>
            <person name="Frise E."/>
            <person name="Park S."/>
            <person name="Wan K."/>
            <person name="Yu C."/>
            <person name="Celniker S."/>
        </authorList>
    </citation>
    <scope>NUCLEOTIDE SEQUENCE [LARGE SCALE MRNA]</scope>
    <source>
        <strain>Berkeley</strain>
        <tissue>Embryo</tissue>
    </source>
</reference>
<reference key="5">
    <citation type="journal article" date="2013" name="Nature">
        <title>Structures of the human and Drosophila 80S ribosome.</title>
        <authorList>
            <person name="Anger A.M."/>
            <person name="Armache J.P."/>
            <person name="Berninghausen O."/>
            <person name="Habeck M."/>
            <person name="Subklewe M."/>
            <person name="Wilson D.N."/>
            <person name="Beckmann R."/>
        </authorList>
    </citation>
    <scope>STRUCTURE BY ELECTRON MICROSCOPY (6.0 ANGSTROMS) OF THE 80S RIBOSOME</scope>
    <scope>FUNCTION</scope>
    <scope>SUBCELLULAR LOCATION</scope>
</reference>
<keyword id="KW-0002">3D-structure</keyword>
<keyword id="KW-0963">Cytoplasm</keyword>
<keyword id="KW-1185">Reference proteome</keyword>
<keyword id="KW-0687">Ribonucleoprotein</keyword>
<keyword id="KW-0689">Ribosomal protein</keyword>
<organism>
    <name type="scientific">Drosophila melanogaster</name>
    <name type="common">Fruit fly</name>
    <dbReference type="NCBI Taxonomy" id="7227"/>
    <lineage>
        <taxon>Eukaryota</taxon>
        <taxon>Metazoa</taxon>
        <taxon>Ecdysozoa</taxon>
        <taxon>Arthropoda</taxon>
        <taxon>Hexapoda</taxon>
        <taxon>Insecta</taxon>
        <taxon>Pterygota</taxon>
        <taxon>Neoptera</taxon>
        <taxon>Endopterygota</taxon>
        <taxon>Diptera</taxon>
        <taxon>Brachycera</taxon>
        <taxon>Muscomorpha</taxon>
        <taxon>Ephydroidea</taxon>
        <taxon>Drosophilidae</taxon>
        <taxon>Drosophila</taxon>
        <taxon>Sophophora</taxon>
    </lineage>
</organism>